<proteinExistence type="inferred from homology"/>
<reference key="1">
    <citation type="journal article" date="2006" name="Proc. Natl. Acad. Sci. U.S.A.">
        <title>Comparative genomics of the lactic acid bacteria.</title>
        <authorList>
            <person name="Makarova K.S."/>
            <person name="Slesarev A."/>
            <person name="Wolf Y.I."/>
            <person name="Sorokin A."/>
            <person name="Mirkin B."/>
            <person name="Koonin E.V."/>
            <person name="Pavlov A."/>
            <person name="Pavlova N."/>
            <person name="Karamychev V."/>
            <person name="Polouchine N."/>
            <person name="Shakhova V."/>
            <person name="Grigoriev I."/>
            <person name="Lou Y."/>
            <person name="Rohksar D."/>
            <person name="Lucas S."/>
            <person name="Huang K."/>
            <person name="Goodstein D.M."/>
            <person name="Hawkins T."/>
            <person name="Plengvidhya V."/>
            <person name="Welker D."/>
            <person name="Hughes J."/>
            <person name="Goh Y."/>
            <person name="Benson A."/>
            <person name="Baldwin K."/>
            <person name="Lee J.-H."/>
            <person name="Diaz-Muniz I."/>
            <person name="Dosti B."/>
            <person name="Smeianov V."/>
            <person name="Wechter W."/>
            <person name="Barabote R."/>
            <person name="Lorca G."/>
            <person name="Altermann E."/>
            <person name="Barrangou R."/>
            <person name="Ganesan B."/>
            <person name="Xie Y."/>
            <person name="Rawsthorne H."/>
            <person name="Tamir D."/>
            <person name="Parker C."/>
            <person name="Breidt F."/>
            <person name="Broadbent J.R."/>
            <person name="Hutkins R."/>
            <person name="O'Sullivan D."/>
            <person name="Steele J."/>
            <person name="Unlu G."/>
            <person name="Saier M.H. Jr."/>
            <person name="Klaenhammer T."/>
            <person name="Richardson P."/>
            <person name="Kozyavkin S."/>
            <person name="Weimer B.C."/>
            <person name="Mills D.A."/>
        </authorList>
    </citation>
    <scope>NUCLEOTIDE SEQUENCE [LARGE SCALE GENOMIC DNA]</scope>
    <source>
        <strain>ATCC BAA-331 / PSU-1</strain>
    </source>
</reference>
<accession>Q04ER2</accession>
<protein>
    <recommendedName>
        <fullName evidence="1">UPF0473 protein OEOE_1164</fullName>
    </recommendedName>
</protein>
<keyword id="KW-1185">Reference proteome</keyword>
<gene>
    <name type="ordered locus">OEOE_1164</name>
</gene>
<sequence length="114" mass="13210">MANKDQQDNDKYVTLTDEKGNESLYEILFTFHSDEYKKDYILFTPAGSDRITVEDPDQEVEIQAFSFDPTSGDSETDSDLYPIENDDEWNMVSEVLNTFVEDDSLRTDDKNDED</sequence>
<comment type="similarity">
    <text evidence="1">Belongs to the UPF0473 family.</text>
</comment>
<dbReference type="EMBL" id="CP000411">
    <property type="protein sequence ID" value="ABJ57060.1"/>
    <property type="molecule type" value="Genomic_DNA"/>
</dbReference>
<dbReference type="RefSeq" id="WP_002820394.1">
    <property type="nucleotide sequence ID" value="NC_008528.1"/>
</dbReference>
<dbReference type="STRING" id="203123.OEOE_1164"/>
<dbReference type="KEGG" id="ooe:OEOE_1164"/>
<dbReference type="PATRIC" id="fig|203123.7.peg.1189"/>
<dbReference type="eggNOG" id="COG3906">
    <property type="taxonomic scope" value="Bacteria"/>
</dbReference>
<dbReference type="HOGENOM" id="CLU_146610_2_1_9"/>
<dbReference type="Proteomes" id="UP000000774">
    <property type="component" value="Chromosome"/>
</dbReference>
<dbReference type="HAMAP" id="MF_01448">
    <property type="entry name" value="UPF0473"/>
    <property type="match status" value="1"/>
</dbReference>
<dbReference type="InterPro" id="IPR009711">
    <property type="entry name" value="UPF0473"/>
</dbReference>
<dbReference type="NCBIfam" id="NF010217">
    <property type="entry name" value="PRK13678.1-4"/>
    <property type="match status" value="1"/>
</dbReference>
<dbReference type="PANTHER" id="PTHR40066">
    <property type="entry name" value="UPF0473 PROTEIN CBO2561/CLC_2432"/>
    <property type="match status" value="1"/>
</dbReference>
<dbReference type="PANTHER" id="PTHR40066:SF1">
    <property type="entry name" value="UPF0473 PROTEIN CBO2561_CLC_2432"/>
    <property type="match status" value="1"/>
</dbReference>
<dbReference type="Pfam" id="PF06949">
    <property type="entry name" value="DUF1292"/>
    <property type="match status" value="1"/>
</dbReference>
<evidence type="ECO:0000255" key="1">
    <source>
        <dbReference type="HAMAP-Rule" id="MF_01448"/>
    </source>
</evidence>
<name>Y1164_OENOB</name>
<feature type="chain" id="PRO_0000304851" description="UPF0473 protein OEOE_1164">
    <location>
        <begin position="1"/>
        <end position="114"/>
    </location>
</feature>
<organism>
    <name type="scientific">Oenococcus oeni (strain ATCC BAA-331 / PSU-1)</name>
    <dbReference type="NCBI Taxonomy" id="203123"/>
    <lineage>
        <taxon>Bacteria</taxon>
        <taxon>Bacillati</taxon>
        <taxon>Bacillota</taxon>
        <taxon>Bacilli</taxon>
        <taxon>Lactobacillales</taxon>
        <taxon>Lactobacillaceae</taxon>
        <taxon>Oenococcus</taxon>
    </lineage>
</organism>